<feature type="transit peptide" description="Mitochondrion" evidence="1">
    <location>
        <begin position="1"/>
        <end position="12"/>
    </location>
</feature>
<feature type="chain" id="PRO_0000440120" description="Nuclear intron maturase 2, mitochondrial">
    <location>
        <begin position="13"/>
        <end position="735"/>
    </location>
</feature>
<feature type="domain" description="Reverse transcriptase" evidence="2">
    <location>
        <begin position="161"/>
        <end position="460"/>
    </location>
</feature>
<feature type="region of interest" description="Intron maturase type-2" evidence="1">
    <location>
        <begin position="485"/>
        <end position="653"/>
    </location>
</feature>
<feature type="region of interest" description="Disordered" evidence="3">
    <location>
        <begin position="707"/>
        <end position="735"/>
    </location>
</feature>
<feature type="compositionally biased region" description="Basic and acidic residues" evidence="3">
    <location>
        <begin position="712"/>
        <end position="721"/>
    </location>
</feature>
<reference key="1">
    <citation type="journal article" date="1998" name="DNA Res.">
        <title>Structural analysis of Arabidopsis thaliana chromosome 5. VI. Sequence features of the regions of 1,367,185 bp covered by 19 physically assigned P1 and TAC clones.</title>
        <authorList>
            <person name="Kotani H."/>
            <person name="Nakamura Y."/>
            <person name="Sato S."/>
            <person name="Asamizu E."/>
            <person name="Kaneko T."/>
            <person name="Miyajima N."/>
            <person name="Tabata S."/>
        </authorList>
    </citation>
    <scope>NUCLEOTIDE SEQUENCE [LARGE SCALE GENOMIC DNA]</scope>
    <source>
        <strain>cv. Columbia</strain>
    </source>
</reference>
<reference key="2">
    <citation type="journal article" date="2017" name="Plant J.">
        <title>Araport11: a complete reannotation of the Arabidopsis thaliana reference genome.</title>
        <authorList>
            <person name="Cheng C.Y."/>
            <person name="Krishnakumar V."/>
            <person name="Chan A.P."/>
            <person name="Thibaud-Nissen F."/>
            <person name="Schobel S."/>
            <person name="Town C.D."/>
        </authorList>
    </citation>
    <scope>GENOME REANNOTATION</scope>
    <source>
        <strain>cv. Columbia</strain>
    </source>
</reference>
<reference key="3">
    <citation type="journal article" date="2003" name="Science">
        <title>Empirical analysis of transcriptional activity in the Arabidopsis genome.</title>
        <authorList>
            <person name="Yamada K."/>
            <person name="Lim J."/>
            <person name="Dale J.M."/>
            <person name="Chen H."/>
            <person name="Shinn P."/>
            <person name="Palm C.J."/>
            <person name="Southwick A.M."/>
            <person name="Wu H.C."/>
            <person name="Kim C.J."/>
            <person name="Nguyen M."/>
            <person name="Pham P.K."/>
            <person name="Cheuk R.F."/>
            <person name="Karlin-Newmann G."/>
            <person name="Liu S.X."/>
            <person name="Lam B."/>
            <person name="Sakano H."/>
            <person name="Wu T."/>
            <person name="Yu G."/>
            <person name="Miranda M."/>
            <person name="Quach H.L."/>
            <person name="Tripp M."/>
            <person name="Chang C.H."/>
            <person name="Lee J.M."/>
            <person name="Toriumi M.J."/>
            <person name="Chan M.M."/>
            <person name="Tang C.C."/>
            <person name="Onodera C.S."/>
            <person name="Deng J.M."/>
            <person name="Akiyama K."/>
            <person name="Ansari Y."/>
            <person name="Arakawa T."/>
            <person name="Banh J."/>
            <person name="Banno F."/>
            <person name="Bowser L."/>
            <person name="Brooks S.Y."/>
            <person name="Carninci P."/>
            <person name="Chao Q."/>
            <person name="Choy N."/>
            <person name="Enju A."/>
            <person name="Goldsmith A.D."/>
            <person name="Gurjal M."/>
            <person name="Hansen N.F."/>
            <person name="Hayashizaki Y."/>
            <person name="Johnson-Hopson C."/>
            <person name="Hsuan V.W."/>
            <person name="Iida K."/>
            <person name="Karnes M."/>
            <person name="Khan S."/>
            <person name="Koesema E."/>
            <person name="Ishida J."/>
            <person name="Jiang P.X."/>
            <person name="Jones T."/>
            <person name="Kawai J."/>
            <person name="Kamiya A."/>
            <person name="Meyers C."/>
            <person name="Nakajima M."/>
            <person name="Narusaka M."/>
            <person name="Seki M."/>
            <person name="Sakurai T."/>
            <person name="Satou M."/>
            <person name="Tamse R."/>
            <person name="Vaysberg M."/>
            <person name="Wallender E.K."/>
            <person name="Wong C."/>
            <person name="Yamamura Y."/>
            <person name="Yuan S."/>
            <person name="Shinozaki K."/>
            <person name="Davis R.W."/>
            <person name="Theologis A."/>
            <person name="Ecker J.R."/>
        </authorList>
    </citation>
    <scope>NUCLEOTIDE SEQUENCE [LARGE SCALE MRNA] OF 441-735</scope>
    <source>
        <strain>cv. Columbia</strain>
    </source>
</reference>
<reference key="4">
    <citation type="journal article" date="2003" name="Nucleic Acids Res.">
        <title>Putative proteins related to group II intron reverse transcriptase/maturases are encoded by nuclear genes in higher plants.</title>
        <authorList>
            <person name="Mohr G."/>
            <person name="Lambowitz A.M."/>
        </authorList>
    </citation>
    <scope>GENE FAMILY</scope>
</reference>
<reference key="5">
    <citation type="journal article" date="2009" name="RNA">
        <title>AtnMat2, a nuclear-encoded maturase required for splicing of group-II introns in Arabidopsis mitochondria.</title>
        <authorList>
            <person name="Keren I."/>
            <person name="Bezawork-Geleta A."/>
            <person name="Kolton M."/>
            <person name="Maayan I."/>
            <person name="Belausov E."/>
            <person name="Levy M."/>
            <person name="Mett A."/>
            <person name="Gidoni D."/>
            <person name="Shaya F."/>
            <person name="Ostersetzer-Biran O."/>
        </authorList>
    </citation>
    <scope>FUNCTION</scope>
    <scope>DISRUPTION PHENOTYPE</scope>
    <scope>SUBCELLULAR LOCATION</scope>
    <scope>SUBUNIT</scope>
    <scope>GENE FAMILY</scope>
    <scope>NOMENCLATURE</scope>
    <source>
        <strain>cv. Columbia</strain>
    </source>
</reference>
<reference key="6">
    <citation type="journal article" date="2012" name="Plant J.">
        <title>nMAT1, a nuclear-encoded maturase involved in the trans-splicing of nad1 intron 1, is essential for mitochondrial complex I assembly and function.</title>
        <authorList>
            <person name="Keren I."/>
            <person name="Tal L."/>
            <person name="des Francs-Small C.C."/>
            <person name="Araujo W.L."/>
            <person name="Shevtsov S."/>
            <person name="Shaya F."/>
            <person name="Fernie A.R."/>
            <person name="Small I."/>
            <person name="Ostersetzer-Biran O."/>
        </authorList>
    </citation>
    <scope>FUNCTION</scope>
    <scope>DISRUPTION PHENOTYPE</scope>
    <source>
        <strain>cv. Columbia</strain>
    </source>
</reference>
<reference key="7">
    <citation type="journal article" date="2014" name="Front. Plant Sci.">
        <title>Group II intron splicing factors in plant mitochondria.</title>
        <authorList>
            <person name="Brown G.G."/>
            <person name="Colas des Francs-Small C."/>
            <person name="Ostersetzer-Biran O."/>
        </authorList>
    </citation>
    <scope>REVIEW ON SPLICING FACTORS</scope>
    <source>
        <strain>cv. Columbia</strain>
    </source>
</reference>
<keyword id="KW-0255">Endonuclease</keyword>
<keyword id="KW-0378">Hydrolase</keyword>
<keyword id="KW-0404">Intron homing</keyword>
<keyword id="KW-0496">Mitochondrion</keyword>
<keyword id="KW-0540">Nuclease</keyword>
<keyword id="KW-1185">Reference proteome</keyword>
<keyword id="KW-0809">Transit peptide</keyword>
<dbReference type="EC" id="3.1.-.-"/>
<dbReference type="EMBL" id="AB013394">
    <property type="protein sequence ID" value="BAB10231.1"/>
    <property type="molecule type" value="Genomic_DNA"/>
</dbReference>
<dbReference type="EMBL" id="CP002688">
    <property type="protein sequence ID" value="AED95448.1"/>
    <property type="molecule type" value="Genomic_DNA"/>
</dbReference>
<dbReference type="EMBL" id="AF372919">
    <property type="protein sequence ID" value="AAK49635.1"/>
    <property type="status" value="ALT_INIT"/>
    <property type="molecule type" value="mRNA"/>
</dbReference>
<dbReference type="EMBL" id="BT003034">
    <property type="protein sequence ID" value="AAO23599.1"/>
    <property type="molecule type" value="mRNA"/>
</dbReference>
<dbReference type="RefSeq" id="NP_199503.1">
    <property type="nucleotide sequence ID" value="NM_124063.3"/>
</dbReference>
<dbReference type="FunCoup" id="Q9FJR9">
    <property type="interactions" value="255"/>
</dbReference>
<dbReference type="STRING" id="3702.Q9FJR9"/>
<dbReference type="iPTMnet" id="Q9FJR9"/>
<dbReference type="PaxDb" id="3702-AT5G46920.1"/>
<dbReference type="ProteomicsDB" id="249444"/>
<dbReference type="EnsemblPlants" id="AT5G46920.1">
    <property type="protein sequence ID" value="AT5G46920.1"/>
    <property type="gene ID" value="AT5G46920"/>
</dbReference>
<dbReference type="GeneID" id="834738"/>
<dbReference type="Gramene" id="AT5G46920.1">
    <property type="protein sequence ID" value="AT5G46920.1"/>
    <property type="gene ID" value="AT5G46920"/>
</dbReference>
<dbReference type="KEGG" id="ath:AT5G46920"/>
<dbReference type="Araport" id="AT5G46920"/>
<dbReference type="TAIR" id="AT5G46920"/>
<dbReference type="eggNOG" id="KOG1075">
    <property type="taxonomic scope" value="Eukaryota"/>
</dbReference>
<dbReference type="HOGENOM" id="CLU_009993_1_0_1"/>
<dbReference type="InParanoid" id="Q9FJR9"/>
<dbReference type="OMA" id="AYTNAQM"/>
<dbReference type="OrthoDB" id="596361at2759"/>
<dbReference type="PhylomeDB" id="Q9FJR9"/>
<dbReference type="PRO" id="PR:Q9FJR9"/>
<dbReference type="Proteomes" id="UP000006548">
    <property type="component" value="Chromosome 5"/>
</dbReference>
<dbReference type="ExpressionAtlas" id="Q9FJR9">
    <property type="expression patterns" value="baseline and differential"/>
</dbReference>
<dbReference type="GO" id="GO:0005739">
    <property type="term" value="C:mitochondrion"/>
    <property type="evidence" value="ECO:0000314"/>
    <property type="project" value="UniProtKB"/>
</dbReference>
<dbReference type="GO" id="GO:0004519">
    <property type="term" value="F:endonuclease activity"/>
    <property type="evidence" value="ECO:0007669"/>
    <property type="project" value="UniProtKB-KW"/>
</dbReference>
<dbReference type="GO" id="GO:0000373">
    <property type="term" value="P:Group II intron splicing"/>
    <property type="evidence" value="ECO:0000315"/>
    <property type="project" value="UniProtKB"/>
</dbReference>
<dbReference type="GO" id="GO:0006314">
    <property type="term" value="P:intron homing"/>
    <property type="evidence" value="ECO:0007669"/>
    <property type="project" value="UniProtKB-KW"/>
</dbReference>
<dbReference type="GO" id="GO:0090615">
    <property type="term" value="P:mitochondrial mRNA processing"/>
    <property type="evidence" value="ECO:0000315"/>
    <property type="project" value="UniProtKB"/>
</dbReference>
<dbReference type="GO" id="GO:0007005">
    <property type="term" value="P:mitochondrion organization"/>
    <property type="evidence" value="ECO:0000315"/>
    <property type="project" value="UniProtKB"/>
</dbReference>
<dbReference type="CDD" id="cd01651">
    <property type="entry name" value="RT_G2_intron"/>
    <property type="match status" value="1"/>
</dbReference>
<dbReference type="InterPro" id="IPR043502">
    <property type="entry name" value="DNA/RNA_pol_sf"/>
</dbReference>
<dbReference type="InterPro" id="IPR024937">
    <property type="entry name" value="Domain_X"/>
</dbReference>
<dbReference type="InterPro" id="IPR051083">
    <property type="entry name" value="GrpII_Intron_Splice-Mob/Def"/>
</dbReference>
<dbReference type="PANTHER" id="PTHR34047">
    <property type="entry name" value="NUCLEAR INTRON MATURASE 1, MITOCHONDRIAL-RELATED"/>
    <property type="match status" value="1"/>
</dbReference>
<dbReference type="PANTHER" id="PTHR34047:SF1">
    <property type="entry name" value="NUCLEAR INTRON MATURASE 2, MITOCHONDRIAL"/>
    <property type="match status" value="1"/>
</dbReference>
<dbReference type="Pfam" id="PF01348">
    <property type="entry name" value="Intron_maturas2"/>
    <property type="match status" value="1"/>
</dbReference>
<dbReference type="SUPFAM" id="SSF56672">
    <property type="entry name" value="DNA/RNA polymerases"/>
    <property type="match status" value="1"/>
</dbReference>
<comment type="function">
    <text evidence="4 5">Nuclear-encoded maturase required for splicing of group-II introns in mitochondria. Involved in the splicing of mitochondrial COX2, NAD1 and NAD7 transcripts (PubMed:19946041). Necessary for mitochondrial biogenesis during early developmental stages (PubMed:22429648).</text>
</comment>
<comment type="subunit">
    <text evidence="4">Associated to a large ribonucleoprotein complex in mitochondria containing group-II intron RNAs.</text>
</comment>
<comment type="subcellular location">
    <subcellularLocation>
        <location evidence="4">Mitochondrion</location>
    </subcellularLocation>
</comment>
<comment type="disruption phenotype">
    <text evidence="4 5">Low germination, slow growth, and late flowering, as well as partial sterile of both male and female gametes. Small, pale and round-shaped leaves. Impaired splicing of mitochondrial group-II introns-containing COX2, NAD1 and NAD7 transcripts (PubMed:19946041). Abnormal mitochondrial mor-phology, including low-density cristae (PubMed:22429648).</text>
</comment>
<comment type="similarity">
    <text evidence="8">Belongs to the plant nuclear intron maturase (nMat) family.</text>
</comment>
<comment type="sequence caution" evidence="8">
    <conflict type="erroneous initiation">
        <sequence resource="EMBL-CDS" id="AAK49635"/>
    </conflict>
    <text>Truncated N-terminus.</text>
</comment>
<evidence type="ECO:0000255" key="1"/>
<evidence type="ECO:0000255" key="2">
    <source>
        <dbReference type="PROSITE-ProRule" id="PRU00405"/>
    </source>
</evidence>
<evidence type="ECO:0000256" key="3">
    <source>
        <dbReference type="SAM" id="MobiDB-lite"/>
    </source>
</evidence>
<evidence type="ECO:0000269" key="4">
    <source>
    </source>
</evidence>
<evidence type="ECO:0000269" key="5">
    <source>
    </source>
</evidence>
<evidence type="ECO:0000303" key="6">
    <source>
    </source>
</evidence>
<evidence type="ECO:0000303" key="7">
    <source>
    </source>
</evidence>
<evidence type="ECO:0000305" key="8"/>
<evidence type="ECO:0000312" key="9">
    <source>
        <dbReference type="Araport" id="AT5G46920"/>
    </source>
</evidence>
<evidence type="ECO:0000312" key="10">
    <source>
        <dbReference type="EMBL" id="BAB10231.1"/>
    </source>
</evidence>
<accession>Q9FJR9</accession>
<accession>Q94JV3</accession>
<proteinExistence type="evidence at protein level"/>
<name>NMAT2_ARATH</name>
<protein>
    <recommendedName>
        <fullName evidence="7">Nuclear intron maturase 2, mitochondrial</fullName>
        <shortName evidence="7">AtnMat2</shortName>
        <ecNumber>3.1.-.-</ecNumber>
    </recommendedName>
    <alternativeName>
        <fullName evidence="6">Nuclear intron maturase 1 b</fullName>
        <shortName evidence="6">AtnMat1b</shortName>
    </alternativeName>
</protein>
<sequence>MRRSFSVLGPYKWLKPSSTYTNVYCFVTNPPLISNPNNGSAIFRYLSYFAPQQRRQQQQAPDPDDPANLLKEDGVSLCSQMWLENFKEPDKTATNLTSYLRRFELWVLAYQKVCCDELGAYVPRSSIQRSALENLLALRNSVLDDRFKWGSRLDFYIKSPRDKTDYESLSKRKIKAILTTTQPTPFQDRIVQEVLLMILEPIYESRFSQKSFAFRPGRTAHTVLRVIRRNFAGYLWYVKGDLSVVLDGMKVGFVISSLMRDVRDKKVIDLIKSALVTPVVTSKVEDGEKKKTKKRKYQKKRVLAEDEPKPDPYWLETFFGFAPEEAGKSPQWGHCGILSPLLVNVCLDELDRWMETKVKDFYRPSKSDVIWNNPEGEADQGNTSWPEFVPTSGPDKTRKMDYVRYGGHILIGVRGPRADAATLRKELIEFVDQKYMLRLDNENLPIEHITKGIMFLDHVLCRRVVYPTLRYTATGGKIISEKGVGTLLSVTASLKQCIKQFRKLLFIKGDRDPDPQPCFRMFHATQAHTNNQMNKFLTTIAEWYRFADNRKKIVNFCSYIIRGSLAKLYAAKYKLRSRAKVYKFANRNLSLPLLQKKGQSPEYQNLLRMGLAESVDGLVYTRMSLVPETDYSPFPGNWRPEHEKFLIEYLTLDEPKTLEEQKRFIREKGLVSPQDYTSMLVWNYKRNAIPMDQVSILKDQPFLLGSSSTYNRDNDDQKNKEEDEDSEDGLRIARM</sequence>
<organism>
    <name type="scientific">Arabidopsis thaliana</name>
    <name type="common">Mouse-ear cress</name>
    <dbReference type="NCBI Taxonomy" id="3702"/>
    <lineage>
        <taxon>Eukaryota</taxon>
        <taxon>Viridiplantae</taxon>
        <taxon>Streptophyta</taxon>
        <taxon>Embryophyta</taxon>
        <taxon>Tracheophyta</taxon>
        <taxon>Spermatophyta</taxon>
        <taxon>Magnoliopsida</taxon>
        <taxon>eudicotyledons</taxon>
        <taxon>Gunneridae</taxon>
        <taxon>Pentapetalae</taxon>
        <taxon>rosids</taxon>
        <taxon>malvids</taxon>
        <taxon>Brassicales</taxon>
        <taxon>Brassicaceae</taxon>
        <taxon>Camelineae</taxon>
        <taxon>Arabidopsis</taxon>
    </lineage>
</organism>
<gene>
    <name evidence="7" type="primary">NMAT2</name>
    <name evidence="6" type="synonym">NMAT1B</name>
    <name evidence="9" type="ordered locus">At5g46920</name>
    <name evidence="10" type="ORF">MQD22.6</name>
</gene>